<keyword id="KW-0884">PQQ biosynthesis</keyword>
<keyword id="KW-0813">Transport</keyword>
<gene>
    <name evidence="1" type="primary">pqqB</name>
    <name type="ordered locus">KPK_2544</name>
</gene>
<organism>
    <name type="scientific">Klebsiella pneumoniae (strain 342)</name>
    <dbReference type="NCBI Taxonomy" id="507522"/>
    <lineage>
        <taxon>Bacteria</taxon>
        <taxon>Pseudomonadati</taxon>
        <taxon>Pseudomonadota</taxon>
        <taxon>Gammaproteobacteria</taxon>
        <taxon>Enterobacterales</taxon>
        <taxon>Enterobacteriaceae</taxon>
        <taxon>Klebsiella/Raoultella group</taxon>
        <taxon>Klebsiella</taxon>
        <taxon>Klebsiella pneumoniae complex</taxon>
    </lineage>
</organism>
<evidence type="ECO:0000255" key="1">
    <source>
        <dbReference type="HAMAP-Rule" id="MF_00653"/>
    </source>
</evidence>
<feature type="chain" id="PRO_1000131162" description="Coenzyme PQQ synthesis protein B">
    <location>
        <begin position="1"/>
        <end position="308"/>
    </location>
</feature>
<dbReference type="EMBL" id="CP000964">
    <property type="protein sequence ID" value="ACI08005.1"/>
    <property type="molecule type" value="Genomic_DNA"/>
</dbReference>
<dbReference type="SMR" id="B5XX61"/>
<dbReference type="KEGG" id="kpe:KPK_2544"/>
<dbReference type="HOGENOM" id="CLU_061120_0_0_6"/>
<dbReference type="UniPathway" id="UPA00539"/>
<dbReference type="Proteomes" id="UP000001734">
    <property type="component" value="Chromosome"/>
</dbReference>
<dbReference type="GO" id="GO:0018189">
    <property type="term" value="P:pyrroloquinoline quinone biosynthetic process"/>
    <property type="evidence" value="ECO:0007669"/>
    <property type="project" value="UniProtKB-UniRule"/>
</dbReference>
<dbReference type="CDD" id="cd16274">
    <property type="entry name" value="PQQB-like_MBL-fold"/>
    <property type="match status" value="1"/>
</dbReference>
<dbReference type="Gene3D" id="3.60.15.10">
    <property type="entry name" value="Ribonuclease Z/Hydroxyacylglutathione hydrolase-like"/>
    <property type="match status" value="1"/>
</dbReference>
<dbReference type="HAMAP" id="MF_00653">
    <property type="entry name" value="PQQ_syn_PqqB"/>
    <property type="match status" value="1"/>
</dbReference>
<dbReference type="InterPro" id="IPR001279">
    <property type="entry name" value="Metallo-B-lactamas"/>
</dbReference>
<dbReference type="InterPro" id="IPR011842">
    <property type="entry name" value="PQQ_synth_PqqB"/>
</dbReference>
<dbReference type="InterPro" id="IPR036866">
    <property type="entry name" value="RibonucZ/Hydroxyglut_hydro"/>
</dbReference>
<dbReference type="NCBIfam" id="TIGR02108">
    <property type="entry name" value="PQQ_syn_pqqB"/>
    <property type="match status" value="1"/>
</dbReference>
<dbReference type="PANTHER" id="PTHR42663:SF7">
    <property type="entry name" value="COENZYME PQQ SYNTHESIS PROTEIN B"/>
    <property type="match status" value="1"/>
</dbReference>
<dbReference type="PANTHER" id="PTHR42663">
    <property type="entry name" value="HYDROLASE C777.06C-RELATED-RELATED"/>
    <property type="match status" value="1"/>
</dbReference>
<dbReference type="Pfam" id="PF12706">
    <property type="entry name" value="Lactamase_B_2"/>
    <property type="match status" value="1"/>
</dbReference>
<dbReference type="SUPFAM" id="SSF56281">
    <property type="entry name" value="Metallo-hydrolase/oxidoreductase"/>
    <property type="match status" value="1"/>
</dbReference>
<protein>
    <recommendedName>
        <fullName evidence="1">Coenzyme PQQ synthesis protein B</fullName>
    </recommendedName>
    <alternativeName>
        <fullName evidence="1">Pyrroloquinoline quinone biosynthesis protein B</fullName>
    </alternativeName>
</protein>
<name>PQQB_KLEP3</name>
<sequence>MFIKVLGSAAGGGFPQWNCNCANCQGLRNGTIQASARTQSSIIVSDNGKEWVLCNASPDISQQIAHTPELNKPGVLRGTSIGGIILTDSQIDHTTGLLSLREGCPHQVWCTPEVHEDLSTGFPVFTMLRHWNGGLVHHPIAPQQPFTVDACPDLQFTAVPIASNAPPYSPYRDRPLPGHNVALFIEYRRNGQTLFYAPGLGEPDEALLPWLQKADCLLIDGTVWQDDELQAAGVGRNTGRDMGHLALSDEHGMMALLASLPAKRKILIHINNTNPILNELSPQRQALKQQGIEVSWDGMAITLQDTAC</sequence>
<accession>B5XX61</accession>
<comment type="function">
    <text evidence="1">May be involved in the transport of PQQ or its precursor to the periplasm.</text>
</comment>
<comment type="pathway">
    <text evidence="1">Cofactor biosynthesis; pyrroloquinoline quinone biosynthesis.</text>
</comment>
<comment type="similarity">
    <text evidence="1">Belongs to the PqqB family.</text>
</comment>
<proteinExistence type="inferred from homology"/>
<reference key="1">
    <citation type="journal article" date="2008" name="PLoS Genet.">
        <title>Complete genome sequence of the N2-fixing broad host range endophyte Klebsiella pneumoniae 342 and virulence predictions verified in mice.</title>
        <authorList>
            <person name="Fouts D.E."/>
            <person name="Tyler H.L."/>
            <person name="DeBoy R.T."/>
            <person name="Daugherty S."/>
            <person name="Ren Q."/>
            <person name="Badger J.H."/>
            <person name="Durkin A.S."/>
            <person name="Huot H."/>
            <person name="Shrivastava S."/>
            <person name="Kothari S."/>
            <person name="Dodson R.J."/>
            <person name="Mohamoud Y."/>
            <person name="Khouri H."/>
            <person name="Roesch L.F.W."/>
            <person name="Krogfelt K.A."/>
            <person name="Struve C."/>
            <person name="Triplett E.W."/>
            <person name="Methe B.A."/>
        </authorList>
    </citation>
    <scope>NUCLEOTIDE SEQUENCE [LARGE SCALE GENOMIC DNA]</scope>
    <source>
        <strain>342</strain>
    </source>
</reference>